<accession>Q6CUB4</accession>
<protein>
    <recommendedName>
        <fullName>ATP-dependent DNA helicase II subunit 1</fullName>
        <ecNumber>3.6.4.12</ecNumber>
    </recommendedName>
    <alternativeName>
        <fullName>ATP-dependent DNA helicase II subunit Ku70</fullName>
    </alternativeName>
</protein>
<keyword id="KW-0067">ATP-binding</keyword>
<keyword id="KW-0158">Chromosome</keyword>
<keyword id="KW-0227">DNA damage</keyword>
<keyword id="KW-0233">DNA recombination</keyword>
<keyword id="KW-0234">DNA repair</keyword>
<keyword id="KW-0238">DNA-binding</keyword>
<keyword id="KW-0347">Helicase</keyword>
<keyword id="KW-0378">Hydrolase</keyword>
<keyword id="KW-0547">Nucleotide-binding</keyword>
<keyword id="KW-0539">Nucleus</keyword>
<keyword id="KW-1185">Reference proteome</keyword>
<keyword id="KW-0779">Telomere</keyword>
<reference key="1">
    <citation type="journal article" date="2004" name="Nature">
        <title>Genome evolution in yeasts.</title>
        <authorList>
            <person name="Dujon B."/>
            <person name="Sherman D."/>
            <person name="Fischer G."/>
            <person name="Durrens P."/>
            <person name="Casaregola S."/>
            <person name="Lafontaine I."/>
            <person name="de Montigny J."/>
            <person name="Marck C."/>
            <person name="Neuveglise C."/>
            <person name="Talla E."/>
            <person name="Goffard N."/>
            <person name="Frangeul L."/>
            <person name="Aigle M."/>
            <person name="Anthouard V."/>
            <person name="Babour A."/>
            <person name="Barbe V."/>
            <person name="Barnay S."/>
            <person name="Blanchin S."/>
            <person name="Beckerich J.-M."/>
            <person name="Beyne E."/>
            <person name="Bleykasten C."/>
            <person name="Boisrame A."/>
            <person name="Boyer J."/>
            <person name="Cattolico L."/>
            <person name="Confanioleri F."/>
            <person name="de Daruvar A."/>
            <person name="Despons L."/>
            <person name="Fabre E."/>
            <person name="Fairhead C."/>
            <person name="Ferry-Dumazet H."/>
            <person name="Groppi A."/>
            <person name="Hantraye F."/>
            <person name="Hennequin C."/>
            <person name="Jauniaux N."/>
            <person name="Joyet P."/>
            <person name="Kachouri R."/>
            <person name="Kerrest A."/>
            <person name="Koszul R."/>
            <person name="Lemaire M."/>
            <person name="Lesur I."/>
            <person name="Ma L."/>
            <person name="Muller H."/>
            <person name="Nicaud J.-M."/>
            <person name="Nikolski M."/>
            <person name="Oztas S."/>
            <person name="Ozier-Kalogeropoulos O."/>
            <person name="Pellenz S."/>
            <person name="Potier S."/>
            <person name="Richard G.-F."/>
            <person name="Straub M.-L."/>
            <person name="Suleau A."/>
            <person name="Swennen D."/>
            <person name="Tekaia F."/>
            <person name="Wesolowski-Louvel M."/>
            <person name="Westhof E."/>
            <person name="Wirth B."/>
            <person name="Zeniou-Meyer M."/>
            <person name="Zivanovic Y."/>
            <person name="Bolotin-Fukuhara M."/>
            <person name="Thierry A."/>
            <person name="Bouchier C."/>
            <person name="Caudron B."/>
            <person name="Scarpelli C."/>
            <person name="Gaillardin C."/>
            <person name="Weissenbach J."/>
            <person name="Wincker P."/>
            <person name="Souciet J.-L."/>
        </authorList>
    </citation>
    <scope>NUCLEOTIDE SEQUENCE [LARGE SCALE GENOMIC DNA]</scope>
    <source>
        <strain>ATCC 8585 / CBS 2359 / DSM 70799 / NBRC 1267 / NRRL Y-1140 / WM37</strain>
    </source>
</reference>
<name>KU70_KLULA</name>
<gene>
    <name type="primary">KU70</name>
    <name type="ordered locus">KLLA0C06226g</name>
</gene>
<organism>
    <name type="scientific">Kluyveromyces lactis (strain ATCC 8585 / CBS 2359 / DSM 70799 / NBRC 1267 / NRRL Y-1140 / WM37)</name>
    <name type="common">Yeast</name>
    <name type="synonym">Candida sphaerica</name>
    <dbReference type="NCBI Taxonomy" id="284590"/>
    <lineage>
        <taxon>Eukaryota</taxon>
        <taxon>Fungi</taxon>
        <taxon>Dikarya</taxon>
        <taxon>Ascomycota</taxon>
        <taxon>Saccharomycotina</taxon>
        <taxon>Saccharomycetes</taxon>
        <taxon>Saccharomycetales</taxon>
        <taxon>Saccharomycetaceae</taxon>
        <taxon>Kluyveromyces</taxon>
    </lineage>
</organism>
<dbReference type="EC" id="3.6.4.12"/>
<dbReference type="EMBL" id="CR382123">
    <property type="protein sequence ID" value="CAH01326.1"/>
    <property type="molecule type" value="Genomic_DNA"/>
</dbReference>
<dbReference type="RefSeq" id="XP_452475.1">
    <property type="nucleotide sequence ID" value="XM_452475.1"/>
</dbReference>
<dbReference type="SMR" id="Q6CUB4"/>
<dbReference type="FunCoup" id="Q6CUB4">
    <property type="interactions" value="726"/>
</dbReference>
<dbReference type="STRING" id="284590.Q6CUB4"/>
<dbReference type="PaxDb" id="284590-Q6CUB4"/>
<dbReference type="KEGG" id="kla:KLLA0_C06226g"/>
<dbReference type="eggNOG" id="KOG2327">
    <property type="taxonomic scope" value="Eukaryota"/>
</dbReference>
<dbReference type="HOGENOM" id="CLU_024202_0_0_1"/>
<dbReference type="InParanoid" id="Q6CUB4"/>
<dbReference type="OMA" id="FWANVKH"/>
<dbReference type="Proteomes" id="UP000000598">
    <property type="component" value="Chromosome C"/>
</dbReference>
<dbReference type="GO" id="GO:0000781">
    <property type="term" value="C:chromosome, telomeric region"/>
    <property type="evidence" value="ECO:0007669"/>
    <property type="project" value="UniProtKB-SubCell"/>
</dbReference>
<dbReference type="GO" id="GO:0043564">
    <property type="term" value="C:Ku70:Ku80 complex"/>
    <property type="evidence" value="ECO:0007669"/>
    <property type="project" value="InterPro"/>
</dbReference>
<dbReference type="GO" id="GO:0005524">
    <property type="term" value="F:ATP binding"/>
    <property type="evidence" value="ECO:0007669"/>
    <property type="project" value="UniProtKB-KW"/>
</dbReference>
<dbReference type="GO" id="GO:0016887">
    <property type="term" value="F:ATP hydrolysis activity"/>
    <property type="evidence" value="ECO:0007669"/>
    <property type="project" value="RHEA"/>
</dbReference>
<dbReference type="GO" id="GO:0003684">
    <property type="term" value="F:damaged DNA binding"/>
    <property type="evidence" value="ECO:0007669"/>
    <property type="project" value="InterPro"/>
</dbReference>
<dbReference type="GO" id="GO:0003678">
    <property type="term" value="F:DNA helicase activity"/>
    <property type="evidence" value="ECO:0007669"/>
    <property type="project" value="InterPro"/>
</dbReference>
<dbReference type="GO" id="GO:0003690">
    <property type="term" value="F:double-stranded DNA binding"/>
    <property type="evidence" value="ECO:0007669"/>
    <property type="project" value="TreeGrafter"/>
</dbReference>
<dbReference type="GO" id="GO:0042162">
    <property type="term" value="F:telomeric DNA binding"/>
    <property type="evidence" value="ECO:0007669"/>
    <property type="project" value="InterPro"/>
</dbReference>
<dbReference type="GO" id="GO:0006310">
    <property type="term" value="P:DNA recombination"/>
    <property type="evidence" value="ECO:0007669"/>
    <property type="project" value="UniProtKB-KW"/>
</dbReference>
<dbReference type="GO" id="GO:0006303">
    <property type="term" value="P:double-strand break repair via nonhomologous end joining"/>
    <property type="evidence" value="ECO:0007669"/>
    <property type="project" value="InterPro"/>
</dbReference>
<dbReference type="GO" id="GO:0000723">
    <property type="term" value="P:telomere maintenance"/>
    <property type="evidence" value="ECO:0007669"/>
    <property type="project" value="InterPro"/>
</dbReference>
<dbReference type="CDD" id="cd00788">
    <property type="entry name" value="KU70"/>
    <property type="match status" value="1"/>
</dbReference>
<dbReference type="Gene3D" id="1.10.1600.10">
    <property type="match status" value="1"/>
</dbReference>
<dbReference type="Gene3D" id="2.40.290.10">
    <property type="match status" value="1"/>
</dbReference>
<dbReference type="Gene3D" id="4.10.970.10">
    <property type="entry name" value="Ku70, bridge and pillars"/>
    <property type="match status" value="1"/>
</dbReference>
<dbReference type="Gene3D" id="3.40.50.410">
    <property type="entry name" value="von Willebrand factor, type A domain"/>
    <property type="match status" value="1"/>
</dbReference>
<dbReference type="InterPro" id="IPR006165">
    <property type="entry name" value="Ku70"/>
</dbReference>
<dbReference type="InterPro" id="IPR006164">
    <property type="entry name" value="Ku70/Ku80_beta-barrel_dom"/>
</dbReference>
<dbReference type="InterPro" id="IPR027388">
    <property type="entry name" value="Ku70_bridge/pillars_dom_sf"/>
</dbReference>
<dbReference type="InterPro" id="IPR047087">
    <property type="entry name" value="KU70_core_dom"/>
</dbReference>
<dbReference type="InterPro" id="IPR005160">
    <property type="entry name" value="Ku_C"/>
</dbReference>
<dbReference type="InterPro" id="IPR005161">
    <property type="entry name" value="Ku_N"/>
</dbReference>
<dbReference type="InterPro" id="IPR016194">
    <property type="entry name" value="SPOC-like_C_dom_sf"/>
</dbReference>
<dbReference type="InterPro" id="IPR036465">
    <property type="entry name" value="vWFA_dom_sf"/>
</dbReference>
<dbReference type="PANTHER" id="PTHR12604">
    <property type="entry name" value="KU AUTOANTIGEN DNA HELICASE"/>
    <property type="match status" value="1"/>
</dbReference>
<dbReference type="PANTHER" id="PTHR12604:SF2">
    <property type="entry name" value="X-RAY REPAIR CROSS-COMPLEMENTING PROTEIN 6"/>
    <property type="match status" value="1"/>
</dbReference>
<dbReference type="Pfam" id="PF02735">
    <property type="entry name" value="Ku"/>
    <property type="match status" value="1"/>
</dbReference>
<dbReference type="Pfam" id="PF03730">
    <property type="entry name" value="Ku_C"/>
    <property type="match status" value="1"/>
</dbReference>
<dbReference type="Pfam" id="PF03731">
    <property type="entry name" value="Ku_N"/>
    <property type="match status" value="1"/>
</dbReference>
<dbReference type="PIRSF" id="PIRSF003033">
    <property type="entry name" value="Ku70"/>
    <property type="match status" value="1"/>
</dbReference>
<dbReference type="SMART" id="SM00559">
    <property type="entry name" value="Ku78"/>
    <property type="match status" value="1"/>
</dbReference>
<dbReference type="SUPFAM" id="SSF100939">
    <property type="entry name" value="SPOC domain-like"/>
    <property type="match status" value="1"/>
</dbReference>
<dbReference type="SUPFAM" id="SSF53300">
    <property type="entry name" value="vWA-like"/>
    <property type="match status" value="1"/>
</dbReference>
<evidence type="ECO:0000250" key="1"/>
<evidence type="ECO:0000256" key="2">
    <source>
        <dbReference type="SAM" id="MobiDB-lite"/>
    </source>
</evidence>
<evidence type="ECO:0000305" key="3"/>
<sequence>MSFEQPDFLKSQLTQTRDDDKESDHKKWRRYEAHDGIVFCIQLTPTMYLSNPDLGGKIQLLEILDSLNDLMSQLVVVMPSTAVGCYIYNCSHPNAEDNVYELIPLRDVNYKNMKRVSDLLEDIEQDRILLKDEIPIADPNNPIELSPVLIKVRETFLQPIEGQKQLTNKKIFFFTDDDKPAEFLNVDSRSRLRKVVDDLYDYYINFVTFFIGSEDKPFDDSMYADILKWGSKINEAQSWLSSHGPSTNPINASYIKSKVKRTKEIKRIKFRCPLMLDERADLVVSVNGYTIVSHEIPGSKYKLVYANGSVRREAYSHREYLDAETGEAVDNSQLSKVYTFGDEIIELTEDENLKIQSGYSEHESFLKLIGFRSTEQCLHYYDNIDVPAFVVPNEEDYAGSIKTLASLYRTMLFKKKSAMVWGKLRPNSPPSMFVLTPSSKKDYNQGFYLYKVPFMEEVRKLPDFLNHSALIESDDYKVMSKVTETLINFFNLKNGYRPSDFHNPALQKHFKILREYLLQIEVDKSKPEDEGDETLQKVKQIYARIASSAKSDDVKQQRLVKYLKLWNSFYNRLSNLEVDTKPTKNKKAKLNL</sequence>
<comment type="function">
    <text evidence="1">Single-stranded DNA-dependent ATP-dependent helicase. Involved in non-homologous end joining (NHEJ) DNA double strand break repair. DNA-binding is sequence-independent but has a high affinity to nicks in double-stranded DNA and to the ends of duplex DNA. Binds to naturally occurring chromosomal ends, and therefore provides chromosomal end protection. Required also for telomere recombination to repair telomeric ends in the absence of telomerase. KU70, of the KU70/KU80 heterodimer, binds to the stem loop of TLC1, the RNA component of telomerase. Involved in telomere maintenance. Interacts with telomeric repeats and subtelomeric sequences thereby controlling telomere length and protecting against subtelomeric rearrangement. Maintains telomeric chromatin, which is involved in silencing the expression of genes located at the telomere. Required for mating-type switching (By similarity).</text>
</comment>
<comment type="catalytic activity">
    <reaction>
        <text>ATP + H2O = ADP + phosphate + H(+)</text>
        <dbReference type="Rhea" id="RHEA:13065"/>
        <dbReference type="ChEBI" id="CHEBI:15377"/>
        <dbReference type="ChEBI" id="CHEBI:15378"/>
        <dbReference type="ChEBI" id="CHEBI:30616"/>
        <dbReference type="ChEBI" id="CHEBI:43474"/>
        <dbReference type="ChEBI" id="CHEBI:456216"/>
        <dbReference type="EC" id="3.6.4.12"/>
    </reaction>
</comment>
<comment type="subunit">
    <text evidence="1">Heterodimer of Ku70 and Ku80.</text>
</comment>
<comment type="subcellular location">
    <subcellularLocation>
        <location evidence="1">Nucleus</location>
    </subcellularLocation>
    <subcellularLocation>
        <location evidence="1">Chromosome</location>
        <location evidence="1">Telomere</location>
    </subcellularLocation>
</comment>
<comment type="similarity">
    <text evidence="3">Belongs to the ku70 family.</text>
</comment>
<feature type="chain" id="PRO_0000278344" description="ATP-dependent DNA helicase II subunit 1">
    <location>
        <begin position="1"/>
        <end position="592"/>
    </location>
</feature>
<feature type="domain" description="Ku">
    <location>
        <begin position="280"/>
        <end position="485"/>
    </location>
</feature>
<feature type="region of interest" description="Disordered" evidence="2">
    <location>
        <begin position="1"/>
        <end position="25"/>
    </location>
</feature>
<feature type="compositionally biased region" description="Basic and acidic residues" evidence="2">
    <location>
        <begin position="16"/>
        <end position="25"/>
    </location>
</feature>
<proteinExistence type="inferred from homology"/>